<organism>
    <name type="scientific">Chromohalobacter salexigens (strain ATCC BAA-138 / DSM 3043 / CIP 106854 / NCIMB 13768 / 1H11)</name>
    <dbReference type="NCBI Taxonomy" id="290398"/>
    <lineage>
        <taxon>Bacteria</taxon>
        <taxon>Pseudomonadati</taxon>
        <taxon>Pseudomonadota</taxon>
        <taxon>Gammaproteobacteria</taxon>
        <taxon>Oceanospirillales</taxon>
        <taxon>Halomonadaceae</taxon>
        <taxon>Chromohalobacter</taxon>
    </lineage>
</organism>
<proteinExistence type="inferred from homology"/>
<accession>Q1QVC8</accession>
<protein>
    <recommendedName>
        <fullName evidence="1">Nucleotide-binding protein Csal_2229</fullName>
    </recommendedName>
</protein>
<feature type="chain" id="PRO_0000258952" description="Nucleotide-binding protein Csal_2229">
    <location>
        <begin position="1"/>
        <end position="298"/>
    </location>
</feature>
<feature type="binding site" evidence="1">
    <location>
        <begin position="8"/>
        <end position="15"/>
    </location>
    <ligand>
        <name>ATP</name>
        <dbReference type="ChEBI" id="CHEBI:30616"/>
    </ligand>
</feature>
<feature type="binding site" evidence="1">
    <location>
        <begin position="59"/>
        <end position="62"/>
    </location>
    <ligand>
        <name>GTP</name>
        <dbReference type="ChEBI" id="CHEBI:37565"/>
    </ligand>
</feature>
<comment type="function">
    <text evidence="1">Displays ATPase and GTPase activities.</text>
</comment>
<comment type="similarity">
    <text evidence="1">Belongs to the RapZ-like family.</text>
</comment>
<evidence type="ECO:0000255" key="1">
    <source>
        <dbReference type="HAMAP-Rule" id="MF_00636"/>
    </source>
</evidence>
<keyword id="KW-0067">ATP-binding</keyword>
<keyword id="KW-0342">GTP-binding</keyword>
<keyword id="KW-0547">Nucleotide-binding</keyword>
<keyword id="KW-1185">Reference proteome</keyword>
<dbReference type="EMBL" id="CP000285">
    <property type="protein sequence ID" value="ABE59580.1"/>
    <property type="molecule type" value="Genomic_DNA"/>
</dbReference>
<dbReference type="RefSeq" id="WP_011507526.1">
    <property type="nucleotide sequence ID" value="NC_007963.1"/>
</dbReference>
<dbReference type="SMR" id="Q1QVC8"/>
<dbReference type="STRING" id="290398.Csal_2229"/>
<dbReference type="GeneID" id="95334947"/>
<dbReference type="KEGG" id="csa:Csal_2229"/>
<dbReference type="eggNOG" id="COG1660">
    <property type="taxonomic scope" value="Bacteria"/>
</dbReference>
<dbReference type="HOGENOM" id="CLU_059558_1_1_6"/>
<dbReference type="OrthoDB" id="9784461at2"/>
<dbReference type="Proteomes" id="UP000000239">
    <property type="component" value="Chromosome"/>
</dbReference>
<dbReference type="GO" id="GO:0005524">
    <property type="term" value="F:ATP binding"/>
    <property type="evidence" value="ECO:0007669"/>
    <property type="project" value="UniProtKB-UniRule"/>
</dbReference>
<dbReference type="GO" id="GO:0005525">
    <property type="term" value="F:GTP binding"/>
    <property type="evidence" value="ECO:0007669"/>
    <property type="project" value="UniProtKB-UniRule"/>
</dbReference>
<dbReference type="Gene3D" id="3.40.50.300">
    <property type="entry name" value="P-loop containing nucleotide triphosphate hydrolases"/>
    <property type="match status" value="1"/>
</dbReference>
<dbReference type="HAMAP" id="MF_00636">
    <property type="entry name" value="RapZ_like"/>
    <property type="match status" value="1"/>
</dbReference>
<dbReference type="InterPro" id="IPR027417">
    <property type="entry name" value="P-loop_NTPase"/>
</dbReference>
<dbReference type="InterPro" id="IPR005337">
    <property type="entry name" value="RapZ-like"/>
</dbReference>
<dbReference type="InterPro" id="IPR053930">
    <property type="entry name" value="RapZ-like_N"/>
</dbReference>
<dbReference type="InterPro" id="IPR053931">
    <property type="entry name" value="RapZ_C"/>
</dbReference>
<dbReference type="NCBIfam" id="NF003828">
    <property type="entry name" value="PRK05416.1"/>
    <property type="match status" value="1"/>
</dbReference>
<dbReference type="PANTHER" id="PTHR30448">
    <property type="entry name" value="RNASE ADAPTER PROTEIN RAPZ"/>
    <property type="match status" value="1"/>
</dbReference>
<dbReference type="PANTHER" id="PTHR30448:SF0">
    <property type="entry name" value="RNASE ADAPTER PROTEIN RAPZ"/>
    <property type="match status" value="1"/>
</dbReference>
<dbReference type="Pfam" id="PF22740">
    <property type="entry name" value="PapZ_C"/>
    <property type="match status" value="1"/>
</dbReference>
<dbReference type="Pfam" id="PF03668">
    <property type="entry name" value="RapZ-like_N"/>
    <property type="match status" value="1"/>
</dbReference>
<dbReference type="PIRSF" id="PIRSF005052">
    <property type="entry name" value="P-loopkin"/>
    <property type="match status" value="1"/>
</dbReference>
<dbReference type="SUPFAM" id="SSF52540">
    <property type="entry name" value="P-loop containing nucleoside triphosphate hydrolases"/>
    <property type="match status" value="1"/>
</dbReference>
<reference key="1">
    <citation type="journal article" date="2011" name="Stand. Genomic Sci.">
        <title>Complete genome sequence of the halophilic and highly halotolerant Chromohalobacter salexigens type strain (1H11(T)).</title>
        <authorList>
            <person name="Copeland A."/>
            <person name="O'Connor K."/>
            <person name="Lucas S."/>
            <person name="Lapidus A."/>
            <person name="Berry K.W."/>
            <person name="Detter J.C."/>
            <person name="Del Rio T.G."/>
            <person name="Hammon N."/>
            <person name="Dalin E."/>
            <person name="Tice H."/>
            <person name="Pitluck S."/>
            <person name="Bruce D."/>
            <person name="Goodwin L."/>
            <person name="Han C."/>
            <person name="Tapia R."/>
            <person name="Saunders E."/>
            <person name="Schmutz J."/>
            <person name="Brettin T."/>
            <person name="Larimer F."/>
            <person name="Land M."/>
            <person name="Hauser L."/>
            <person name="Vargas C."/>
            <person name="Nieto J.J."/>
            <person name="Kyrpides N.C."/>
            <person name="Ivanova N."/>
            <person name="Goker M."/>
            <person name="Klenk H.P."/>
            <person name="Csonka L.N."/>
            <person name="Woyke T."/>
        </authorList>
    </citation>
    <scope>NUCLEOTIDE SEQUENCE [LARGE SCALE GENOMIC DNA]</scope>
    <source>
        <strain>ATCC BAA-138 / DSM 3043 / CIP 106854 / NCIMB 13768 / 1H11</strain>
    </source>
</reference>
<gene>
    <name type="ordered locus">Csal_2229</name>
</gene>
<name>Y2229_CHRSD</name>
<sequence>MQLVIISGRSGSGKSIALQALEDLGYYAIDNLPASLMAPLIDELREGPPSRTHIAVSIDARNLPDALRRFPVLLEEIRGRGIQCQVVYLTADSRILLERYSATRRRHPLTRASEMTLAEAIEQEQTYLAPIRDIGDLVIDTSSLSVHELRGRIAEQVARHSGRHLTLTFESFGYKRGVPLDADMVFDARCLPNPYWDPQLRGFDGRDAQIVTFLEAYPDVRAMADDIRHWLERWLPAYLASNRSYLTVAVGCTGGQHRSVYLVEDLAHHFAQQMSGVRLRHRELGVQAALPEDGNAVS</sequence>